<reference key="1">
    <citation type="journal article" date="2009" name="Genome Res.">
        <title>Comparative genomic analyses of the human fungal pathogens Coccidioides and their relatives.</title>
        <authorList>
            <person name="Sharpton T.J."/>
            <person name="Stajich J.E."/>
            <person name="Rounsley S.D."/>
            <person name="Gardner M.J."/>
            <person name="Wortman J.R."/>
            <person name="Jordar V.S."/>
            <person name="Maiti R."/>
            <person name="Kodira C.D."/>
            <person name="Neafsey D.E."/>
            <person name="Zeng Q."/>
            <person name="Hung C.-Y."/>
            <person name="McMahan C."/>
            <person name="Muszewska A."/>
            <person name="Grynberg M."/>
            <person name="Mandel M.A."/>
            <person name="Kellner E.M."/>
            <person name="Barker B.M."/>
            <person name="Galgiani J.N."/>
            <person name="Orbach M.J."/>
            <person name="Kirkland T.N."/>
            <person name="Cole G.T."/>
            <person name="Henn M.R."/>
            <person name="Birren B.W."/>
            <person name="Taylor J.W."/>
        </authorList>
    </citation>
    <scope>NUCLEOTIDE SEQUENCE [LARGE SCALE GENOMIC DNA]</scope>
    <source>
        <strain>C735</strain>
    </source>
</reference>
<feature type="signal peptide" evidence="2">
    <location>
        <begin position="1"/>
        <end position="34"/>
    </location>
</feature>
<feature type="chain" id="PRO_0000411213" description="Putative dipeptidase CPC735_015490">
    <location>
        <begin position="35"/>
        <end position="444"/>
    </location>
</feature>
<feature type="binding site" evidence="3">
    <location>
        <position position="67"/>
    </location>
    <ligand>
        <name>Zn(2+)</name>
        <dbReference type="ChEBI" id="CHEBI:29105"/>
        <label>1</label>
        <note>catalytic</note>
    </ligand>
</feature>
<feature type="binding site" evidence="3">
    <location>
        <position position="69"/>
    </location>
    <ligand>
        <name>Zn(2+)</name>
        <dbReference type="ChEBI" id="CHEBI:29105"/>
        <label>1</label>
        <note>catalytic</note>
    </ligand>
</feature>
<feature type="binding site" evidence="3">
    <location>
        <position position="178"/>
    </location>
    <ligand>
        <name>Zn(2+)</name>
        <dbReference type="ChEBI" id="CHEBI:29105"/>
        <label>1</label>
        <note>catalytic</note>
    </ligand>
</feature>
<feature type="binding site" evidence="3">
    <location>
        <position position="178"/>
    </location>
    <ligand>
        <name>Zn(2+)</name>
        <dbReference type="ChEBI" id="CHEBI:29105"/>
        <label>2</label>
        <note>catalytic</note>
    </ligand>
</feature>
<feature type="binding site" evidence="3">
    <location>
        <position position="205"/>
    </location>
    <ligand>
        <name>substrate</name>
    </ligand>
</feature>
<feature type="binding site" evidence="3">
    <location>
        <position position="250"/>
    </location>
    <ligand>
        <name>Zn(2+)</name>
        <dbReference type="ChEBI" id="CHEBI:29105"/>
        <label>2</label>
        <note>catalytic</note>
    </ligand>
</feature>
<feature type="binding site" evidence="3">
    <location>
        <position position="271"/>
    </location>
    <ligand>
        <name>Zn(2+)</name>
        <dbReference type="ChEBI" id="CHEBI:29105"/>
        <label>2</label>
        <note>catalytic</note>
    </ligand>
</feature>
<feature type="binding site" evidence="3">
    <location>
        <position position="282"/>
    </location>
    <ligand>
        <name>substrate</name>
    </ligand>
</feature>
<feature type="binding site" evidence="3">
    <location>
        <position position="342"/>
    </location>
    <ligand>
        <name>substrate</name>
    </ligand>
</feature>
<feature type="glycosylation site" description="N-linked (GlcNAc...) asparagine" evidence="2">
    <location>
        <position position="413"/>
    </location>
</feature>
<feature type="disulfide bond" evidence="3">
    <location>
        <begin position="118"/>
        <end position="207"/>
    </location>
</feature>
<sequence length="444" mass="49351">MSQRTEHNGSWLRNAGSLLSVLACVAVLASPASATPASAAAAAAPRTDDYLKRAERILKFTPLIDGHNDLPNFIRKTTKNQIYEGKIPFEDELPGHTDLKRLRKGRVGGQFWSVYTPCPDPPVPIDNPTWSVRDTLEQIDVTKRLIEKYSRDLQFCGDARCARRAFRRGKIASFLGIEGGHQIGNSLGDLRRVYELGVRYITVTHNCDNAFATAQSTVADGLPDTGLMKPFGIEFVKEMNRLGMLVDLSHVSANTMRDTLKVARAPVIFSHSSAYAVSNHLRNVPDDVLKEVAKNNGVVMVTFVSRFVNVENPDAADINTVVDHIFHIAKVAGWDHVGIGGDYDGTVYLPKGLEDVSKYPHLIARVLERGATTQQVRKLVGENILRVWTEVERIAKRLQKTELPNEAYWEGRNWTRPAKRDLNADFEGRSVPLFTSASNGDFCD</sequence>
<dbReference type="EC" id="3.4.13.19" evidence="3"/>
<dbReference type="EMBL" id="ACFW01000043">
    <property type="protein sequence ID" value="EER24951.1"/>
    <property type="molecule type" value="Genomic_DNA"/>
</dbReference>
<dbReference type="RefSeq" id="XP_003067096.1">
    <property type="nucleotide sequence ID" value="XM_003067050.1"/>
</dbReference>
<dbReference type="SMR" id="C5PCZ0"/>
<dbReference type="KEGG" id="cpw:9692567"/>
<dbReference type="VEuPathDB" id="FungiDB:CPC735_015490"/>
<dbReference type="HOGENOM" id="CLU_031404_4_2_1"/>
<dbReference type="OrthoDB" id="445695at2759"/>
<dbReference type="Proteomes" id="UP000009084">
    <property type="component" value="Unassembled WGS sequence"/>
</dbReference>
<dbReference type="GO" id="GO:0046872">
    <property type="term" value="F:metal ion binding"/>
    <property type="evidence" value="ECO:0007669"/>
    <property type="project" value="UniProtKB-KW"/>
</dbReference>
<dbReference type="GO" id="GO:0070573">
    <property type="term" value="F:metallodipeptidase activity"/>
    <property type="evidence" value="ECO:0007669"/>
    <property type="project" value="InterPro"/>
</dbReference>
<dbReference type="GO" id="GO:0006508">
    <property type="term" value="P:proteolysis"/>
    <property type="evidence" value="ECO:0007669"/>
    <property type="project" value="UniProtKB-KW"/>
</dbReference>
<dbReference type="CDD" id="cd01301">
    <property type="entry name" value="rDP_like"/>
    <property type="match status" value="1"/>
</dbReference>
<dbReference type="Gene3D" id="3.20.20.140">
    <property type="entry name" value="Metal-dependent hydrolases"/>
    <property type="match status" value="1"/>
</dbReference>
<dbReference type="InterPro" id="IPR000180">
    <property type="entry name" value="Dipep_AS"/>
</dbReference>
<dbReference type="InterPro" id="IPR032466">
    <property type="entry name" value="Metal_Hydrolase"/>
</dbReference>
<dbReference type="InterPro" id="IPR008257">
    <property type="entry name" value="Pept_M19"/>
</dbReference>
<dbReference type="PANTHER" id="PTHR10443:SF12">
    <property type="entry name" value="DIPEPTIDASE"/>
    <property type="match status" value="1"/>
</dbReference>
<dbReference type="PANTHER" id="PTHR10443">
    <property type="entry name" value="MICROSOMAL DIPEPTIDASE"/>
    <property type="match status" value="1"/>
</dbReference>
<dbReference type="Pfam" id="PF01244">
    <property type="entry name" value="Peptidase_M19"/>
    <property type="match status" value="1"/>
</dbReference>
<dbReference type="SUPFAM" id="SSF51556">
    <property type="entry name" value="Metallo-dependent hydrolases"/>
    <property type="match status" value="1"/>
</dbReference>
<dbReference type="PROSITE" id="PS00869">
    <property type="entry name" value="RENAL_DIPEPTIDASE_1"/>
    <property type="match status" value="1"/>
</dbReference>
<dbReference type="PROSITE" id="PS51365">
    <property type="entry name" value="RENAL_DIPEPTIDASE_2"/>
    <property type="match status" value="1"/>
</dbReference>
<evidence type="ECO:0000250" key="1"/>
<evidence type="ECO:0000255" key="2"/>
<evidence type="ECO:0000255" key="3">
    <source>
        <dbReference type="PROSITE-ProRule" id="PRU10073"/>
    </source>
</evidence>
<accession>C5PCZ0</accession>
<comment type="function">
    <text evidence="1">Hydrolyzes a wide range of dipeptides.</text>
</comment>
<comment type="catalytic activity">
    <reaction evidence="3">
        <text>an L-aminoacyl-L-amino acid + H2O = 2 an L-alpha-amino acid</text>
        <dbReference type="Rhea" id="RHEA:48940"/>
        <dbReference type="ChEBI" id="CHEBI:15377"/>
        <dbReference type="ChEBI" id="CHEBI:59869"/>
        <dbReference type="ChEBI" id="CHEBI:77460"/>
        <dbReference type="EC" id="3.4.13.19"/>
    </reaction>
</comment>
<comment type="cofactor">
    <cofactor evidence="3">
        <name>Zn(2+)</name>
        <dbReference type="ChEBI" id="CHEBI:29105"/>
    </cofactor>
</comment>
<comment type="similarity">
    <text evidence="3">Belongs to the metallo-dependent hydrolases superfamily. Peptidase M19 family.</text>
</comment>
<name>DPEP1_COCP7</name>
<protein>
    <recommendedName>
        <fullName>Putative dipeptidase CPC735_015490</fullName>
        <ecNumber evidence="3">3.4.13.19</ecNumber>
    </recommendedName>
</protein>
<proteinExistence type="inferred from homology"/>
<organism>
    <name type="scientific">Coccidioides posadasii (strain C735)</name>
    <name type="common">Valley fever fungus</name>
    <dbReference type="NCBI Taxonomy" id="222929"/>
    <lineage>
        <taxon>Eukaryota</taxon>
        <taxon>Fungi</taxon>
        <taxon>Dikarya</taxon>
        <taxon>Ascomycota</taxon>
        <taxon>Pezizomycotina</taxon>
        <taxon>Eurotiomycetes</taxon>
        <taxon>Eurotiomycetidae</taxon>
        <taxon>Onygenales</taxon>
        <taxon>Onygenaceae</taxon>
        <taxon>Coccidioides</taxon>
    </lineage>
</organism>
<keyword id="KW-0224">Dipeptidase</keyword>
<keyword id="KW-1015">Disulfide bond</keyword>
<keyword id="KW-0325">Glycoprotein</keyword>
<keyword id="KW-0378">Hydrolase</keyword>
<keyword id="KW-0479">Metal-binding</keyword>
<keyword id="KW-0482">Metalloprotease</keyword>
<keyword id="KW-0645">Protease</keyword>
<keyword id="KW-0732">Signal</keyword>
<keyword id="KW-0862">Zinc</keyword>
<gene>
    <name type="ORF">CPC735_015490</name>
</gene>